<name>RTCA_PYRNV</name>
<protein>
    <recommendedName>
        <fullName evidence="1">RNA 3'-terminal phosphate cyclase</fullName>
        <shortName evidence="1">RNA cyclase</shortName>
        <shortName evidence="1">RNA-3'-phosphate cyclase</shortName>
        <ecNumber evidence="1">6.5.1.4</ecNumber>
    </recommendedName>
</protein>
<feature type="chain" id="PRO_1000099356" description="RNA 3'-terminal phosphate cyclase">
    <location>
        <begin position="1"/>
        <end position="347"/>
    </location>
</feature>
<feature type="active site" description="Tele-AMP-histidine intermediate" evidence="1">
    <location>
        <position position="312"/>
    </location>
</feature>
<feature type="binding site" evidence="1">
    <location>
        <position position="101"/>
    </location>
    <ligand>
        <name>ATP</name>
        <dbReference type="ChEBI" id="CHEBI:30616"/>
    </ligand>
</feature>
<feature type="binding site" evidence="1">
    <location>
        <begin position="286"/>
        <end position="289"/>
    </location>
    <ligand>
        <name>ATP</name>
        <dbReference type="ChEBI" id="CHEBI:30616"/>
    </ligand>
</feature>
<gene>
    <name evidence="1" type="primary">rtcA</name>
    <name type="ordered locus">Tneu_0917</name>
</gene>
<sequence length="347" mass="36649">MAVRIDGSYGEGGGQILRTSIALSALLGKPVEIVNIRAKRANPGLQPQHLTGVSAAALLTDAEVEGAAKGSTRLFFKPKALKCGTFNIDIGTAGSISLVVQTLAPILLYAPCPTKLVITGGTDVAWAPPIDYMRFVFARYLTRFGARIAIELVKRGHYPRGGGKAVVQAEPAGRLRAVDSVEFGRPAKIAGVSHAVNLPPHVAERQARAAREALAKLGYAAEVEVEARNDGLGPGSGVVLWAESDVGNVVGGDALGERGKPAEEVGREAAEKLAAVLKAGASLDPHMADMVVLYMALAQGRSRLSTTEATMHLQTNIYIVEQFLPVKFKLERAGPRYIIEVEGVGYP</sequence>
<organism>
    <name type="scientific">Pyrobaculum neutrophilum (strain DSM 2338 / JCM 9278 / NBRC 100436 / V24Sta)</name>
    <name type="common">Thermoproteus neutrophilus</name>
    <dbReference type="NCBI Taxonomy" id="444157"/>
    <lineage>
        <taxon>Archaea</taxon>
        <taxon>Thermoproteota</taxon>
        <taxon>Thermoprotei</taxon>
        <taxon>Thermoproteales</taxon>
        <taxon>Thermoproteaceae</taxon>
        <taxon>Pyrobaculum</taxon>
    </lineage>
</organism>
<dbReference type="EC" id="6.5.1.4" evidence="1"/>
<dbReference type="EMBL" id="CP001014">
    <property type="protein sequence ID" value="ACB39854.1"/>
    <property type="molecule type" value="Genomic_DNA"/>
</dbReference>
<dbReference type="RefSeq" id="WP_012350274.1">
    <property type="nucleotide sequence ID" value="NC_010525.1"/>
</dbReference>
<dbReference type="SMR" id="B1YDJ1"/>
<dbReference type="STRING" id="444157.Tneu_0917"/>
<dbReference type="GeneID" id="6164583"/>
<dbReference type="KEGG" id="tne:Tneu_0917"/>
<dbReference type="eggNOG" id="arCOG04125">
    <property type="taxonomic scope" value="Archaea"/>
</dbReference>
<dbReference type="HOGENOM" id="CLU_027882_0_0_2"/>
<dbReference type="OrthoDB" id="7994at2157"/>
<dbReference type="Proteomes" id="UP000001694">
    <property type="component" value="Chromosome"/>
</dbReference>
<dbReference type="GO" id="GO:0005737">
    <property type="term" value="C:cytoplasm"/>
    <property type="evidence" value="ECO:0007669"/>
    <property type="project" value="UniProtKB-SubCell"/>
</dbReference>
<dbReference type="GO" id="GO:0005524">
    <property type="term" value="F:ATP binding"/>
    <property type="evidence" value="ECO:0007669"/>
    <property type="project" value="UniProtKB-KW"/>
</dbReference>
<dbReference type="GO" id="GO:0003963">
    <property type="term" value="F:RNA-3'-phosphate cyclase activity"/>
    <property type="evidence" value="ECO:0007669"/>
    <property type="project" value="UniProtKB-UniRule"/>
</dbReference>
<dbReference type="GO" id="GO:0006396">
    <property type="term" value="P:RNA processing"/>
    <property type="evidence" value="ECO:0007669"/>
    <property type="project" value="InterPro"/>
</dbReference>
<dbReference type="CDD" id="cd00874">
    <property type="entry name" value="RNA_Cyclase_Class_II"/>
    <property type="match status" value="1"/>
</dbReference>
<dbReference type="FunFam" id="3.30.360.20:FF:000002">
    <property type="entry name" value="RNA terminal phosphate cyclase-like 1"/>
    <property type="match status" value="1"/>
</dbReference>
<dbReference type="Gene3D" id="3.65.10.20">
    <property type="entry name" value="RNA 3'-terminal phosphate cyclase domain"/>
    <property type="match status" value="1"/>
</dbReference>
<dbReference type="Gene3D" id="3.30.360.20">
    <property type="entry name" value="RNA 3'-terminal phosphate cyclase, insert domain"/>
    <property type="match status" value="1"/>
</dbReference>
<dbReference type="HAMAP" id="MF_00200">
    <property type="entry name" value="RTC"/>
    <property type="match status" value="1"/>
</dbReference>
<dbReference type="InterPro" id="IPR013791">
    <property type="entry name" value="RNA3'-term_phos_cycl_insert"/>
</dbReference>
<dbReference type="InterPro" id="IPR023797">
    <property type="entry name" value="RNA3'_phos_cyclase_dom"/>
</dbReference>
<dbReference type="InterPro" id="IPR037136">
    <property type="entry name" value="RNA3'_phos_cyclase_dom_sf"/>
</dbReference>
<dbReference type="InterPro" id="IPR000228">
    <property type="entry name" value="RNA3'_term_phos_cyc"/>
</dbReference>
<dbReference type="InterPro" id="IPR017770">
    <property type="entry name" value="RNA3'_term_phos_cyc_type_1"/>
</dbReference>
<dbReference type="InterPro" id="IPR013792">
    <property type="entry name" value="RNA3'P_cycl/enolpyr_Trfase_a/b"/>
</dbReference>
<dbReference type="InterPro" id="IPR036553">
    <property type="entry name" value="RPTC_insert"/>
</dbReference>
<dbReference type="NCBIfam" id="TIGR03399">
    <property type="entry name" value="RNA_3prim_cycl"/>
    <property type="match status" value="1"/>
</dbReference>
<dbReference type="PANTHER" id="PTHR11096">
    <property type="entry name" value="RNA 3' TERMINAL PHOSPHATE CYCLASE"/>
    <property type="match status" value="1"/>
</dbReference>
<dbReference type="PANTHER" id="PTHR11096:SF0">
    <property type="entry name" value="RNA 3'-TERMINAL PHOSPHATE CYCLASE"/>
    <property type="match status" value="1"/>
</dbReference>
<dbReference type="Pfam" id="PF01137">
    <property type="entry name" value="RTC"/>
    <property type="match status" value="1"/>
</dbReference>
<dbReference type="Pfam" id="PF05189">
    <property type="entry name" value="RTC_insert"/>
    <property type="match status" value="1"/>
</dbReference>
<dbReference type="PIRSF" id="PIRSF005378">
    <property type="entry name" value="RNA3'_term_phos_cycl_euk"/>
    <property type="match status" value="1"/>
</dbReference>
<dbReference type="SUPFAM" id="SSF55205">
    <property type="entry name" value="EPT/RTPC-like"/>
    <property type="match status" value="2"/>
</dbReference>
<dbReference type="SUPFAM" id="SSF52913">
    <property type="entry name" value="RNA 3'-terminal phosphate cyclase, RPTC, insert domain"/>
    <property type="match status" value="1"/>
</dbReference>
<proteinExistence type="inferred from homology"/>
<comment type="function">
    <text evidence="1">Catalyzes the conversion of 3'-phosphate to a 2',3'-cyclic phosphodiester at the end of RNA. The mechanism of action of the enzyme occurs in 3 steps: (A) adenylation of the enzyme by ATP; (B) transfer of adenylate to an RNA-N3'P to produce RNA-N3'PP5'A; (C) and attack of the adjacent 2'-hydroxyl on the 3'-phosphorus in the diester linkage to produce the cyclic end product. The biological role of this enzyme is unknown but it is likely to function in some aspects of cellular RNA processing.</text>
</comment>
<comment type="catalytic activity">
    <reaction evidence="1">
        <text>a 3'-end 3'-phospho-ribonucleotide-RNA + ATP = a 3'-end 2',3'-cyclophospho-ribonucleotide-RNA + AMP + diphosphate</text>
        <dbReference type="Rhea" id="RHEA:23976"/>
        <dbReference type="Rhea" id="RHEA-COMP:10463"/>
        <dbReference type="Rhea" id="RHEA-COMP:10464"/>
        <dbReference type="ChEBI" id="CHEBI:30616"/>
        <dbReference type="ChEBI" id="CHEBI:33019"/>
        <dbReference type="ChEBI" id="CHEBI:83062"/>
        <dbReference type="ChEBI" id="CHEBI:83064"/>
        <dbReference type="ChEBI" id="CHEBI:456215"/>
        <dbReference type="EC" id="6.5.1.4"/>
    </reaction>
</comment>
<comment type="subcellular location">
    <subcellularLocation>
        <location evidence="1">Cytoplasm</location>
    </subcellularLocation>
</comment>
<comment type="similarity">
    <text evidence="1">Belongs to the RNA 3'-terminal cyclase family. Type 1 subfamily.</text>
</comment>
<keyword id="KW-0067">ATP-binding</keyword>
<keyword id="KW-0963">Cytoplasm</keyword>
<keyword id="KW-0436">Ligase</keyword>
<keyword id="KW-0547">Nucleotide-binding</keyword>
<accession>B1YDJ1</accession>
<reference key="1">
    <citation type="submission" date="2008-03" db="EMBL/GenBank/DDBJ databases">
        <title>Complete sequence of Thermoproteus neutrophilus V24Sta.</title>
        <authorList>
            <consortium name="US DOE Joint Genome Institute"/>
            <person name="Copeland A."/>
            <person name="Lucas S."/>
            <person name="Lapidus A."/>
            <person name="Glavina del Rio T."/>
            <person name="Dalin E."/>
            <person name="Tice H."/>
            <person name="Bruce D."/>
            <person name="Goodwin L."/>
            <person name="Pitluck S."/>
            <person name="Sims D."/>
            <person name="Brettin T."/>
            <person name="Detter J.C."/>
            <person name="Han C."/>
            <person name="Kuske C.R."/>
            <person name="Schmutz J."/>
            <person name="Larimer F."/>
            <person name="Land M."/>
            <person name="Hauser L."/>
            <person name="Kyrpides N."/>
            <person name="Mikhailova N."/>
            <person name="Biddle J.F."/>
            <person name="Zhang Z."/>
            <person name="Fitz-Gibbon S.T."/>
            <person name="Lowe T.M."/>
            <person name="Saltikov C."/>
            <person name="House C.H."/>
            <person name="Richardson P."/>
        </authorList>
    </citation>
    <scope>NUCLEOTIDE SEQUENCE [LARGE SCALE GENOMIC DNA]</scope>
    <source>
        <strain>DSM 2338 / JCM 9278 / NBRC 100436 / V24Sta</strain>
    </source>
</reference>
<evidence type="ECO:0000255" key="1">
    <source>
        <dbReference type="HAMAP-Rule" id="MF_00200"/>
    </source>
</evidence>